<organism>
    <name type="scientific">Escherichia coli (strain UTI89 / UPEC)</name>
    <dbReference type="NCBI Taxonomy" id="364106"/>
    <lineage>
        <taxon>Bacteria</taxon>
        <taxon>Pseudomonadati</taxon>
        <taxon>Pseudomonadota</taxon>
        <taxon>Gammaproteobacteria</taxon>
        <taxon>Enterobacterales</taxon>
        <taxon>Enterobacteriaceae</taxon>
        <taxon>Escherichia</taxon>
    </lineage>
</organism>
<protein>
    <recommendedName>
        <fullName>S-formylglutathione hydrolase YeiG</fullName>
        <shortName>FGH</shortName>
        <ecNumber>3.1.2.12</ecNumber>
    </recommendedName>
</protein>
<dbReference type="EC" id="3.1.2.12"/>
<dbReference type="EMBL" id="CP000243">
    <property type="protein sequence ID" value="ABE07896.1"/>
    <property type="molecule type" value="Genomic_DNA"/>
</dbReference>
<dbReference type="RefSeq" id="WP_000425456.1">
    <property type="nucleotide sequence ID" value="NZ_CP064825.1"/>
</dbReference>
<dbReference type="SMR" id="Q1R9R8"/>
<dbReference type="ESTHER" id="ecoli-yeiG">
    <property type="family name" value="A85-EsteraseD-FGH"/>
</dbReference>
<dbReference type="MEROPS" id="S09.A39"/>
<dbReference type="KEGG" id="eci:UTI89_C2428"/>
<dbReference type="HOGENOM" id="CLU_056472_0_0_6"/>
<dbReference type="Proteomes" id="UP000001952">
    <property type="component" value="Chromosome"/>
</dbReference>
<dbReference type="GO" id="GO:0005829">
    <property type="term" value="C:cytosol"/>
    <property type="evidence" value="ECO:0007669"/>
    <property type="project" value="TreeGrafter"/>
</dbReference>
<dbReference type="GO" id="GO:0052689">
    <property type="term" value="F:carboxylic ester hydrolase activity"/>
    <property type="evidence" value="ECO:0007669"/>
    <property type="project" value="UniProtKB-KW"/>
</dbReference>
<dbReference type="GO" id="GO:0018738">
    <property type="term" value="F:S-formylglutathione hydrolase activity"/>
    <property type="evidence" value="ECO:0007669"/>
    <property type="project" value="UniProtKB-EC"/>
</dbReference>
<dbReference type="GO" id="GO:0046294">
    <property type="term" value="P:formaldehyde catabolic process"/>
    <property type="evidence" value="ECO:0007669"/>
    <property type="project" value="InterPro"/>
</dbReference>
<dbReference type="FunFam" id="3.40.50.1820:FF:000002">
    <property type="entry name" value="S-formylglutathione hydrolase"/>
    <property type="match status" value="1"/>
</dbReference>
<dbReference type="Gene3D" id="3.40.50.1820">
    <property type="entry name" value="alpha/beta hydrolase"/>
    <property type="match status" value="1"/>
</dbReference>
<dbReference type="InterPro" id="IPR029058">
    <property type="entry name" value="AB_hydrolase_fold"/>
</dbReference>
<dbReference type="InterPro" id="IPR000801">
    <property type="entry name" value="Esterase-like"/>
</dbReference>
<dbReference type="InterPro" id="IPR014186">
    <property type="entry name" value="S-formylglutathione_hydrol"/>
</dbReference>
<dbReference type="NCBIfam" id="TIGR02821">
    <property type="entry name" value="fghA_ester_D"/>
    <property type="match status" value="1"/>
</dbReference>
<dbReference type="PANTHER" id="PTHR10061">
    <property type="entry name" value="S-FORMYLGLUTATHIONE HYDROLASE"/>
    <property type="match status" value="1"/>
</dbReference>
<dbReference type="PANTHER" id="PTHR10061:SF1">
    <property type="entry name" value="S-FORMYLGLUTATHIONE HYDROLASE YEIG"/>
    <property type="match status" value="1"/>
</dbReference>
<dbReference type="Pfam" id="PF00756">
    <property type="entry name" value="Esterase"/>
    <property type="match status" value="1"/>
</dbReference>
<dbReference type="SUPFAM" id="SSF53474">
    <property type="entry name" value="alpha/beta-Hydrolases"/>
    <property type="match status" value="1"/>
</dbReference>
<keyword id="KW-0378">Hydrolase</keyword>
<keyword id="KW-0719">Serine esterase</keyword>
<gene>
    <name type="primary">yeiG</name>
    <name type="ordered locus">UTI89_C2428</name>
</gene>
<sequence>MEMLEEHRCFEGWQQRWRHDSSTLNCPMTFSIFLPPPRDHTPPPVLYWLSGLTCNDENFTTKAGAQRVAAELGIVLVMPDTSPRGEQVANDDGYDLGQGAGFYLNATQPPWATHYRMYDYLRDELPALIQSQFNVSDRCAISGHSMGGHGALIMALKNPGKYTSVSAFAPIVNPCSVPWGIKAFSTYLGEDKNAWLEWDSCALMYASNAQDAIPTLIDQGDNDQFLADQLQPAVLAEAARQKAWPMTLRIQPGYDHSYYFIASFIEDHLRFHAQYLLK</sequence>
<comment type="function">
    <text evidence="1">Serine hydrolase involved in the detoxification of formaldehyde. Hydrolyzes S-formylglutathione to glutathione and formate (By similarity).</text>
</comment>
<comment type="catalytic activity">
    <reaction>
        <text>S-formylglutathione + H2O = formate + glutathione + H(+)</text>
        <dbReference type="Rhea" id="RHEA:14961"/>
        <dbReference type="ChEBI" id="CHEBI:15377"/>
        <dbReference type="ChEBI" id="CHEBI:15378"/>
        <dbReference type="ChEBI" id="CHEBI:15740"/>
        <dbReference type="ChEBI" id="CHEBI:57688"/>
        <dbReference type="ChEBI" id="CHEBI:57925"/>
        <dbReference type="EC" id="3.1.2.12"/>
    </reaction>
</comment>
<comment type="similarity">
    <text evidence="2">Belongs to the esterase D family.</text>
</comment>
<evidence type="ECO:0000250" key="1"/>
<evidence type="ECO:0000305" key="2"/>
<feature type="chain" id="PRO_0000341668" description="S-formylglutathione hydrolase YeiG">
    <location>
        <begin position="1"/>
        <end position="278"/>
    </location>
</feature>
<feature type="active site" description="Charge relay system" evidence="1">
    <location>
        <position position="145"/>
    </location>
</feature>
<feature type="active site" description="Charge relay system" evidence="1">
    <location>
        <position position="223"/>
    </location>
</feature>
<feature type="active site" description="Charge relay system" evidence="1">
    <location>
        <position position="256"/>
    </location>
</feature>
<proteinExistence type="inferred from homology"/>
<accession>Q1R9R8</accession>
<name>SFGH2_ECOUT</name>
<reference key="1">
    <citation type="journal article" date="2006" name="Proc. Natl. Acad. Sci. U.S.A.">
        <title>Identification of genes subject to positive selection in uropathogenic strains of Escherichia coli: a comparative genomics approach.</title>
        <authorList>
            <person name="Chen S.L."/>
            <person name="Hung C.-S."/>
            <person name="Xu J."/>
            <person name="Reigstad C.S."/>
            <person name="Magrini V."/>
            <person name="Sabo A."/>
            <person name="Blasiar D."/>
            <person name="Bieri T."/>
            <person name="Meyer R.R."/>
            <person name="Ozersky P."/>
            <person name="Armstrong J.R."/>
            <person name="Fulton R.S."/>
            <person name="Latreille J.P."/>
            <person name="Spieth J."/>
            <person name="Hooton T.M."/>
            <person name="Mardis E.R."/>
            <person name="Hultgren S.J."/>
            <person name="Gordon J.I."/>
        </authorList>
    </citation>
    <scope>NUCLEOTIDE SEQUENCE [LARGE SCALE GENOMIC DNA]</scope>
    <source>
        <strain>UTI89 / UPEC</strain>
    </source>
</reference>